<dbReference type="EC" id="7.1.1.-" evidence="1"/>
<dbReference type="EMBL" id="CP000323">
    <property type="protein sequence ID" value="ABE74363.1"/>
    <property type="molecule type" value="Genomic_DNA"/>
</dbReference>
<dbReference type="RefSeq" id="WP_011512931.1">
    <property type="nucleotide sequence ID" value="NC_007969.1"/>
</dbReference>
<dbReference type="SMR" id="Q1QD90"/>
<dbReference type="STRING" id="335284.Pcryo_0580"/>
<dbReference type="KEGG" id="pcr:Pcryo_0580"/>
<dbReference type="eggNOG" id="COG1143">
    <property type="taxonomic scope" value="Bacteria"/>
</dbReference>
<dbReference type="HOGENOM" id="CLU_067218_4_3_6"/>
<dbReference type="Proteomes" id="UP000002425">
    <property type="component" value="Chromosome"/>
</dbReference>
<dbReference type="GO" id="GO:0005886">
    <property type="term" value="C:plasma membrane"/>
    <property type="evidence" value="ECO:0007669"/>
    <property type="project" value="UniProtKB-SubCell"/>
</dbReference>
<dbReference type="GO" id="GO:0051539">
    <property type="term" value="F:4 iron, 4 sulfur cluster binding"/>
    <property type="evidence" value="ECO:0007669"/>
    <property type="project" value="UniProtKB-KW"/>
</dbReference>
<dbReference type="GO" id="GO:0005506">
    <property type="term" value="F:iron ion binding"/>
    <property type="evidence" value="ECO:0007669"/>
    <property type="project" value="UniProtKB-UniRule"/>
</dbReference>
<dbReference type="GO" id="GO:0050136">
    <property type="term" value="F:NADH:ubiquinone reductase (non-electrogenic) activity"/>
    <property type="evidence" value="ECO:0007669"/>
    <property type="project" value="UniProtKB-UniRule"/>
</dbReference>
<dbReference type="GO" id="GO:0048038">
    <property type="term" value="F:quinone binding"/>
    <property type="evidence" value="ECO:0007669"/>
    <property type="project" value="UniProtKB-KW"/>
</dbReference>
<dbReference type="GO" id="GO:0009060">
    <property type="term" value="P:aerobic respiration"/>
    <property type="evidence" value="ECO:0007669"/>
    <property type="project" value="TreeGrafter"/>
</dbReference>
<dbReference type="FunFam" id="3.30.70.3270:FF:000002">
    <property type="entry name" value="NADH-quinone oxidoreductase subunit I"/>
    <property type="match status" value="1"/>
</dbReference>
<dbReference type="Gene3D" id="3.30.70.3270">
    <property type="match status" value="1"/>
</dbReference>
<dbReference type="HAMAP" id="MF_01351">
    <property type="entry name" value="NDH1_NuoI"/>
    <property type="match status" value="1"/>
</dbReference>
<dbReference type="InterPro" id="IPR017896">
    <property type="entry name" value="4Fe4S_Fe-S-bd"/>
</dbReference>
<dbReference type="InterPro" id="IPR017900">
    <property type="entry name" value="4Fe4S_Fe_S_CS"/>
</dbReference>
<dbReference type="InterPro" id="IPR010226">
    <property type="entry name" value="NADH_quinone_OxRdtase_chainI"/>
</dbReference>
<dbReference type="NCBIfam" id="TIGR01971">
    <property type="entry name" value="NuoI"/>
    <property type="match status" value="1"/>
</dbReference>
<dbReference type="NCBIfam" id="NF004536">
    <property type="entry name" value="PRK05888.1-1"/>
    <property type="match status" value="1"/>
</dbReference>
<dbReference type="PANTHER" id="PTHR10849:SF20">
    <property type="entry name" value="NADH DEHYDROGENASE [UBIQUINONE] IRON-SULFUR PROTEIN 8, MITOCHONDRIAL"/>
    <property type="match status" value="1"/>
</dbReference>
<dbReference type="PANTHER" id="PTHR10849">
    <property type="entry name" value="NADH DEHYDROGENASE UBIQUINONE IRON-SULFUR PROTEIN 8, MITOCHONDRIAL"/>
    <property type="match status" value="1"/>
</dbReference>
<dbReference type="Pfam" id="PF12838">
    <property type="entry name" value="Fer4_7"/>
    <property type="match status" value="1"/>
</dbReference>
<dbReference type="SUPFAM" id="SSF54862">
    <property type="entry name" value="4Fe-4S ferredoxins"/>
    <property type="match status" value="1"/>
</dbReference>
<dbReference type="PROSITE" id="PS00198">
    <property type="entry name" value="4FE4S_FER_1"/>
    <property type="match status" value="2"/>
</dbReference>
<dbReference type="PROSITE" id="PS51379">
    <property type="entry name" value="4FE4S_FER_2"/>
    <property type="match status" value="2"/>
</dbReference>
<feature type="chain" id="PRO_0000245735" description="NADH-quinone oxidoreductase subunit I">
    <location>
        <begin position="1"/>
        <end position="182"/>
    </location>
</feature>
<feature type="domain" description="4Fe-4S ferredoxin-type 1" evidence="1">
    <location>
        <begin position="50"/>
        <end position="82"/>
    </location>
</feature>
<feature type="domain" description="4Fe-4S ferredoxin-type 2" evidence="1">
    <location>
        <begin position="92"/>
        <end position="121"/>
    </location>
</feature>
<feature type="binding site" evidence="1">
    <location>
        <position position="62"/>
    </location>
    <ligand>
        <name>[4Fe-4S] cluster</name>
        <dbReference type="ChEBI" id="CHEBI:49883"/>
        <label>1</label>
    </ligand>
</feature>
<feature type="binding site" evidence="1">
    <location>
        <position position="65"/>
    </location>
    <ligand>
        <name>[4Fe-4S] cluster</name>
        <dbReference type="ChEBI" id="CHEBI:49883"/>
        <label>1</label>
    </ligand>
</feature>
<feature type="binding site" evidence="1">
    <location>
        <position position="68"/>
    </location>
    <ligand>
        <name>[4Fe-4S] cluster</name>
        <dbReference type="ChEBI" id="CHEBI:49883"/>
        <label>1</label>
    </ligand>
</feature>
<feature type="binding site" evidence="1">
    <location>
        <position position="72"/>
    </location>
    <ligand>
        <name>[4Fe-4S] cluster</name>
        <dbReference type="ChEBI" id="CHEBI:49883"/>
        <label>2</label>
    </ligand>
</feature>
<feature type="binding site" evidence="1">
    <location>
        <position position="101"/>
    </location>
    <ligand>
        <name>[4Fe-4S] cluster</name>
        <dbReference type="ChEBI" id="CHEBI:49883"/>
        <label>2</label>
    </ligand>
</feature>
<feature type="binding site" evidence="1">
    <location>
        <position position="104"/>
    </location>
    <ligand>
        <name>[4Fe-4S] cluster</name>
        <dbReference type="ChEBI" id="CHEBI:49883"/>
        <label>2</label>
    </ligand>
</feature>
<feature type="binding site" evidence="1">
    <location>
        <position position="107"/>
    </location>
    <ligand>
        <name>[4Fe-4S] cluster</name>
        <dbReference type="ChEBI" id="CHEBI:49883"/>
        <label>2</label>
    </ligand>
</feature>
<feature type="binding site" evidence="1">
    <location>
        <position position="111"/>
    </location>
    <ligand>
        <name>[4Fe-4S] cluster</name>
        <dbReference type="ChEBI" id="CHEBI:49883"/>
        <label>1</label>
    </ligand>
</feature>
<sequence>MFTTIKKTVIGLFTIVRSMWMVNSHALRPRDTILYPEVPVPVPPRFRGRIILSRDPDGDERCVACNLCAVACPVGCISLQKAEREDGRWYPEFFRINFSRCIFCGLCEEACPTTAIQMTPDFEMGEYVRQDLVYEKEHLLISGPGKYPDYNYYRVTGMAVADKPKGAAQNEAAPIDLRSLLP</sequence>
<keyword id="KW-0004">4Fe-4S</keyword>
<keyword id="KW-0997">Cell inner membrane</keyword>
<keyword id="KW-1003">Cell membrane</keyword>
<keyword id="KW-0408">Iron</keyword>
<keyword id="KW-0411">Iron-sulfur</keyword>
<keyword id="KW-0472">Membrane</keyword>
<keyword id="KW-0479">Metal-binding</keyword>
<keyword id="KW-0520">NAD</keyword>
<keyword id="KW-0874">Quinone</keyword>
<keyword id="KW-0677">Repeat</keyword>
<keyword id="KW-1278">Translocase</keyword>
<keyword id="KW-0830">Ubiquinone</keyword>
<protein>
    <recommendedName>
        <fullName evidence="1">NADH-quinone oxidoreductase subunit I</fullName>
        <ecNumber evidence="1">7.1.1.-</ecNumber>
    </recommendedName>
    <alternativeName>
        <fullName evidence="1">NADH dehydrogenase I subunit I</fullName>
    </alternativeName>
    <alternativeName>
        <fullName evidence="1">NDH-1 subunit I</fullName>
    </alternativeName>
</protein>
<name>NUOI_PSYCK</name>
<comment type="function">
    <text evidence="1">NDH-1 shuttles electrons from NADH, via FMN and iron-sulfur (Fe-S) centers, to quinones in the respiratory chain. The immediate electron acceptor for the enzyme in this species is believed to be ubiquinone. Couples the redox reaction to proton translocation (for every two electrons transferred, four hydrogen ions are translocated across the cytoplasmic membrane), and thus conserves the redox energy in a proton gradient.</text>
</comment>
<comment type="catalytic activity">
    <reaction evidence="1">
        <text>a quinone + NADH + 5 H(+)(in) = a quinol + NAD(+) + 4 H(+)(out)</text>
        <dbReference type="Rhea" id="RHEA:57888"/>
        <dbReference type="ChEBI" id="CHEBI:15378"/>
        <dbReference type="ChEBI" id="CHEBI:24646"/>
        <dbReference type="ChEBI" id="CHEBI:57540"/>
        <dbReference type="ChEBI" id="CHEBI:57945"/>
        <dbReference type="ChEBI" id="CHEBI:132124"/>
    </reaction>
</comment>
<comment type="cofactor">
    <cofactor evidence="1">
        <name>[4Fe-4S] cluster</name>
        <dbReference type="ChEBI" id="CHEBI:49883"/>
    </cofactor>
    <text evidence="1">Binds 2 [4Fe-4S] clusters per subunit.</text>
</comment>
<comment type="subunit">
    <text evidence="1">NDH-1 is composed of 14 different subunits. Subunits NuoA, H, J, K, L, M, N constitute the membrane sector of the complex.</text>
</comment>
<comment type="subcellular location">
    <subcellularLocation>
        <location evidence="1">Cell inner membrane</location>
        <topology evidence="1">Peripheral membrane protein</topology>
    </subcellularLocation>
</comment>
<comment type="similarity">
    <text evidence="1">Belongs to the complex I 23 kDa subunit family.</text>
</comment>
<organism>
    <name type="scientific">Psychrobacter cryohalolentis (strain ATCC BAA-1226 / DSM 17306 / VKM B-2378 / K5)</name>
    <dbReference type="NCBI Taxonomy" id="335284"/>
    <lineage>
        <taxon>Bacteria</taxon>
        <taxon>Pseudomonadati</taxon>
        <taxon>Pseudomonadota</taxon>
        <taxon>Gammaproteobacteria</taxon>
        <taxon>Moraxellales</taxon>
        <taxon>Moraxellaceae</taxon>
        <taxon>Psychrobacter</taxon>
    </lineage>
</organism>
<reference key="1">
    <citation type="submission" date="2006-03" db="EMBL/GenBank/DDBJ databases">
        <title>Complete sequence of chromosome of Psychrobacter cryohalolentis K5.</title>
        <authorList>
            <consortium name="US DOE Joint Genome Institute"/>
            <person name="Copeland A."/>
            <person name="Lucas S."/>
            <person name="Lapidus A."/>
            <person name="Barry K."/>
            <person name="Detter J.C."/>
            <person name="Glavina T."/>
            <person name="Hammon N."/>
            <person name="Israni S."/>
            <person name="Dalin E."/>
            <person name="Tice H."/>
            <person name="Pitluck S."/>
            <person name="Brettin T."/>
            <person name="Bruce D."/>
            <person name="Han C."/>
            <person name="Tapia R."/>
            <person name="Sims D.R."/>
            <person name="Gilna P."/>
            <person name="Schmutz J."/>
            <person name="Larimer F."/>
            <person name="Land M."/>
            <person name="Hauser L."/>
            <person name="Kyrpides N."/>
            <person name="Kim E."/>
            <person name="Richardson P."/>
        </authorList>
    </citation>
    <scope>NUCLEOTIDE SEQUENCE [LARGE SCALE GENOMIC DNA]</scope>
    <source>
        <strain>ATCC BAA-1226 / DSM 17306 / VKM B-2378 / K5</strain>
    </source>
</reference>
<proteinExistence type="inferred from homology"/>
<gene>
    <name evidence="1" type="primary">nuoI</name>
    <name type="ordered locus">Pcryo_0580</name>
</gene>
<evidence type="ECO:0000255" key="1">
    <source>
        <dbReference type="HAMAP-Rule" id="MF_01351"/>
    </source>
</evidence>
<accession>Q1QD90</accession>